<evidence type="ECO:0000255" key="1">
    <source>
        <dbReference type="HAMAP-Rule" id="MF_00741"/>
    </source>
</evidence>
<name>PUR5_PHOPR</name>
<comment type="catalytic activity">
    <reaction evidence="1">
        <text>2-formamido-N(1)-(5-O-phospho-beta-D-ribosyl)acetamidine + ATP = 5-amino-1-(5-phospho-beta-D-ribosyl)imidazole + ADP + phosphate + H(+)</text>
        <dbReference type="Rhea" id="RHEA:23032"/>
        <dbReference type="ChEBI" id="CHEBI:15378"/>
        <dbReference type="ChEBI" id="CHEBI:30616"/>
        <dbReference type="ChEBI" id="CHEBI:43474"/>
        <dbReference type="ChEBI" id="CHEBI:137981"/>
        <dbReference type="ChEBI" id="CHEBI:147287"/>
        <dbReference type="ChEBI" id="CHEBI:456216"/>
        <dbReference type="EC" id="6.3.3.1"/>
    </reaction>
</comment>
<comment type="pathway">
    <text evidence="1">Purine metabolism; IMP biosynthesis via de novo pathway; 5-amino-1-(5-phospho-D-ribosyl)imidazole from N(2)-formyl-N(1)-(5-phospho-D-ribosyl)glycinamide: step 2/2.</text>
</comment>
<comment type="subcellular location">
    <subcellularLocation>
        <location evidence="1">Cytoplasm</location>
    </subcellularLocation>
</comment>
<comment type="similarity">
    <text evidence="1">Belongs to the AIR synthase family.</text>
</comment>
<organism>
    <name type="scientific">Photobacterium profundum (strain SS9)</name>
    <dbReference type="NCBI Taxonomy" id="298386"/>
    <lineage>
        <taxon>Bacteria</taxon>
        <taxon>Pseudomonadati</taxon>
        <taxon>Pseudomonadota</taxon>
        <taxon>Gammaproteobacteria</taxon>
        <taxon>Vibrionales</taxon>
        <taxon>Vibrionaceae</taxon>
        <taxon>Photobacterium</taxon>
    </lineage>
</organism>
<feature type="chain" id="PRO_0000258378" description="Phosphoribosylformylglycinamidine cyclo-ligase">
    <location>
        <begin position="1"/>
        <end position="346"/>
    </location>
</feature>
<dbReference type="EC" id="6.3.3.1" evidence="1"/>
<dbReference type="EMBL" id="CR378672">
    <property type="protein sequence ID" value="CAG21253.1"/>
    <property type="molecule type" value="Genomic_DNA"/>
</dbReference>
<dbReference type="RefSeq" id="WP_011219521.1">
    <property type="nucleotide sequence ID" value="NC_006370.1"/>
</dbReference>
<dbReference type="SMR" id="Q6LN73"/>
<dbReference type="STRING" id="298386.PBPRA2910"/>
<dbReference type="KEGG" id="ppr:PBPRA2910"/>
<dbReference type="eggNOG" id="COG0150">
    <property type="taxonomic scope" value="Bacteria"/>
</dbReference>
<dbReference type="HOGENOM" id="CLU_047116_0_0_6"/>
<dbReference type="UniPathway" id="UPA00074">
    <property type="reaction ID" value="UER00129"/>
</dbReference>
<dbReference type="Proteomes" id="UP000000593">
    <property type="component" value="Chromosome 1"/>
</dbReference>
<dbReference type="GO" id="GO:0005829">
    <property type="term" value="C:cytosol"/>
    <property type="evidence" value="ECO:0007669"/>
    <property type="project" value="TreeGrafter"/>
</dbReference>
<dbReference type="GO" id="GO:0005524">
    <property type="term" value="F:ATP binding"/>
    <property type="evidence" value="ECO:0007669"/>
    <property type="project" value="UniProtKB-KW"/>
</dbReference>
<dbReference type="GO" id="GO:0004637">
    <property type="term" value="F:phosphoribosylamine-glycine ligase activity"/>
    <property type="evidence" value="ECO:0007669"/>
    <property type="project" value="TreeGrafter"/>
</dbReference>
<dbReference type="GO" id="GO:0004641">
    <property type="term" value="F:phosphoribosylformylglycinamidine cyclo-ligase activity"/>
    <property type="evidence" value="ECO:0007669"/>
    <property type="project" value="UniProtKB-UniRule"/>
</dbReference>
<dbReference type="GO" id="GO:0006189">
    <property type="term" value="P:'de novo' IMP biosynthetic process"/>
    <property type="evidence" value="ECO:0007669"/>
    <property type="project" value="UniProtKB-UniRule"/>
</dbReference>
<dbReference type="GO" id="GO:0046084">
    <property type="term" value="P:adenine biosynthetic process"/>
    <property type="evidence" value="ECO:0007669"/>
    <property type="project" value="TreeGrafter"/>
</dbReference>
<dbReference type="CDD" id="cd02196">
    <property type="entry name" value="PurM"/>
    <property type="match status" value="1"/>
</dbReference>
<dbReference type="FunFam" id="3.30.1330.10:FF:000001">
    <property type="entry name" value="Phosphoribosylformylglycinamidine cyclo-ligase"/>
    <property type="match status" value="1"/>
</dbReference>
<dbReference type="FunFam" id="3.90.650.10:FF:000001">
    <property type="entry name" value="Phosphoribosylformylglycinamidine cyclo-ligase"/>
    <property type="match status" value="1"/>
</dbReference>
<dbReference type="Gene3D" id="3.90.650.10">
    <property type="entry name" value="PurM-like C-terminal domain"/>
    <property type="match status" value="1"/>
</dbReference>
<dbReference type="Gene3D" id="3.30.1330.10">
    <property type="entry name" value="PurM-like, N-terminal domain"/>
    <property type="match status" value="1"/>
</dbReference>
<dbReference type="HAMAP" id="MF_00741">
    <property type="entry name" value="AIRS"/>
    <property type="match status" value="1"/>
</dbReference>
<dbReference type="InterPro" id="IPR010918">
    <property type="entry name" value="PurM-like_C_dom"/>
</dbReference>
<dbReference type="InterPro" id="IPR036676">
    <property type="entry name" value="PurM-like_C_sf"/>
</dbReference>
<dbReference type="InterPro" id="IPR016188">
    <property type="entry name" value="PurM-like_N"/>
</dbReference>
<dbReference type="InterPro" id="IPR036921">
    <property type="entry name" value="PurM-like_N_sf"/>
</dbReference>
<dbReference type="InterPro" id="IPR004733">
    <property type="entry name" value="PurM_cligase"/>
</dbReference>
<dbReference type="NCBIfam" id="TIGR00878">
    <property type="entry name" value="purM"/>
    <property type="match status" value="1"/>
</dbReference>
<dbReference type="PANTHER" id="PTHR10520:SF12">
    <property type="entry name" value="TRIFUNCTIONAL PURINE BIOSYNTHETIC PROTEIN ADENOSINE-3"/>
    <property type="match status" value="1"/>
</dbReference>
<dbReference type="PANTHER" id="PTHR10520">
    <property type="entry name" value="TRIFUNCTIONAL PURINE BIOSYNTHETIC PROTEIN ADENOSINE-3-RELATED"/>
    <property type="match status" value="1"/>
</dbReference>
<dbReference type="Pfam" id="PF00586">
    <property type="entry name" value="AIRS"/>
    <property type="match status" value="1"/>
</dbReference>
<dbReference type="Pfam" id="PF02769">
    <property type="entry name" value="AIRS_C"/>
    <property type="match status" value="1"/>
</dbReference>
<dbReference type="SUPFAM" id="SSF56042">
    <property type="entry name" value="PurM C-terminal domain-like"/>
    <property type="match status" value="1"/>
</dbReference>
<dbReference type="SUPFAM" id="SSF55326">
    <property type="entry name" value="PurM N-terminal domain-like"/>
    <property type="match status" value="1"/>
</dbReference>
<protein>
    <recommendedName>
        <fullName evidence="1">Phosphoribosylformylglycinamidine cyclo-ligase</fullName>
        <ecNumber evidence="1">6.3.3.1</ecNumber>
    </recommendedName>
    <alternativeName>
        <fullName evidence="1">AIR synthase</fullName>
    </alternativeName>
    <alternativeName>
        <fullName evidence="1">AIRS</fullName>
    </alternativeName>
    <alternativeName>
        <fullName evidence="1">Phosphoribosyl-aminoimidazole synthetase</fullName>
    </alternativeName>
</protein>
<sequence length="346" mass="36606">MSGNNSSLSYKDAGVDIDAGNALVDRIKGVVKRTHRPEVMGGIGGFGALCSLPTKYKEPILVSGTDGVGTKLRLAMDLNKHDTIGIDLVAMCVNDLIVQGGEPLFFLDYYATGKLDVDTAASVVAGIGEGCIQAGCALIGGETAEMPGMYHGEDYDVAGFCVGVVEKADIIDGSKVQAGDALIAVGSSGPHSNGYSLVRKIIEVSNADLNEELEGKSLADHLLTPTKIYVKSTLKMMESCDVHAISHITGGGFWENIPRVLPEGAKAVVDGNSWQWPAIFNWLQTAGNVETYEMYRTFNCGVGLVIALPQAQAEQAIEILKAEGENAWLLGSIANAEVGEEQVEIK</sequence>
<reference key="1">
    <citation type="journal article" date="2005" name="Science">
        <title>Life at depth: Photobacterium profundum genome sequence and expression analysis.</title>
        <authorList>
            <person name="Vezzi A."/>
            <person name="Campanaro S."/>
            <person name="D'Angelo M."/>
            <person name="Simonato F."/>
            <person name="Vitulo N."/>
            <person name="Lauro F.M."/>
            <person name="Cestaro A."/>
            <person name="Malacrida G."/>
            <person name="Simionati B."/>
            <person name="Cannata N."/>
            <person name="Romualdi C."/>
            <person name="Bartlett D.H."/>
            <person name="Valle G."/>
        </authorList>
    </citation>
    <scope>NUCLEOTIDE SEQUENCE [LARGE SCALE GENOMIC DNA]</scope>
    <source>
        <strain>ATCC BAA-1253 / SS9</strain>
    </source>
</reference>
<gene>
    <name evidence="1" type="primary">purM</name>
    <name type="ordered locus">PBPRA2910</name>
</gene>
<keyword id="KW-0067">ATP-binding</keyword>
<keyword id="KW-0963">Cytoplasm</keyword>
<keyword id="KW-0436">Ligase</keyword>
<keyword id="KW-0547">Nucleotide-binding</keyword>
<keyword id="KW-0658">Purine biosynthesis</keyword>
<keyword id="KW-1185">Reference proteome</keyword>
<accession>Q6LN73</accession>
<proteinExistence type="inferred from homology"/>